<keyword id="KW-0067">ATP-binding</keyword>
<keyword id="KW-0418">Kinase</keyword>
<keyword id="KW-0547">Nucleotide-binding</keyword>
<keyword id="KW-0597">Phosphoprotein</keyword>
<keyword id="KW-1185">Reference proteome</keyword>
<keyword id="KW-0723">Serine/threonine-protein kinase</keyword>
<keyword id="KW-0808">Transferase</keyword>
<gene>
    <name type="primary">CDKB1-1</name>
    <name type="ordered locus">Os01g0897000</name>
    <name type="ordered locus">LOC_Os01g67160</name>
    <name type="ORF">OsJ_04403</name>
    <name type="ORF">P0674H09.14</name>
    <name type="ORF">P0696G06.32</name>
</gene>
<dbReference type="EC" id="2.7.11.22"/>
<dbReference type="EC" id="2.7.11.23"/>
<dbReference type="EMBL" id="AB239918">
    <property type="protein sequence ID" value="BAE93883.1"/>
    <property type="molecule type" value="mRNA"/>
</dbReference>
<dbReference type="EMBL" id="AP003316">
    <property type="protein sequence ID" value="BAC06275.1"/>
    <property type="molecule type" value="Genomic_DNA"/>
</dbReference>
<dbReference type="EMBL" id="AP003349">
    <property type="protein sequence ID" value="BAD82176.1"/>
    <property type="status" value="ALT_SEQ"/>
    <property type="molecule type" value="Genomic_DNA"/>
</dbReference>
<dbReference type="EMBL" id="AP008207">
    <property type="protein sequence ID" value="BAF06998.1"/>
    <property type="status" value="ALT_SEQ"/>
    <property type="molecule type" value="Genomic_DNA"/>
</dbReference>
<dbReference type="EMBL" id="AP014957">
    <property type="protein sequence ID" value="BAS75708.1"/>
    <property type="molecule type" value="Genomic_DNA"/>
</dbReference>
<dbReference type="EMBL" id="CM000138">
    <property type="protein sequence ID" value="EEE55809.1"/>
    <property type="molecule type" value="Genomic_DNA"/>
</dbReference>
<dbReference type="RefSeq" id="XP_015626887.1">
    <property type="nucleotide sequence ID" value="XM_015771401.1"/>
</dbReference>
<dbReference type="SMR" id="Q8L4P8"/>
<dbReference type="FunCoup" id="Q8L4P8">
    <property type="interactions" value="312"/>
</dbReference>
<dbReference type="STRING" id="39947.Q8L4P8"/>
<dbReference type="iPTMnet" id="Q8L4P8"/>
<dbReference type="PaxDb" id="39947-Q8L4P8"/>
<dbReference type="EnsemblPlants" id="Os01t0897000-01">
    <property type="protein sequence ID" value="Os01t0897000-01"/>
    <property type="gene ID" value="Os01g0897000"/>
</dbReference>
<dbReference type="Gramene" id="Os01t0897000-01">
    <property type="protein sequence ID" value="Os01t0897000-01"/>
    <property type="gene ID" value="Os01g0897000"/>
</dbReference>
<dbReference type="eggNOG" id="KOG0594">
    <property type="taxonomic scope" value="Eukaryota"/>
</dbReference>
<dbReference type="HOGENOM" id="CLU_000288_181_6_1"/>
<dbReference type="InParanoid" id="Q8L4P8"/>
<dbReference type="OMA" id="PGTCLRE"/>
<dbReference type="OrthoDB" id="1732493at2759"/>
<dbReference type="Proteomes" id="UP000000763">
    <property type="component" value="Chromosome 1"/>
</dbReference>
<dbReference type="Proteomes" id="UP000007752">
    <property type="component" value="Chromosome 1"/>
</dbReference>
<dbReference type="Proteomes" id="UP000059680">
    <property type="component" value="Chromosome 1"/>
</dbReference>
<dbReference type="GO" id="GO:0000307">
    <property type="term" value="C:cyclin-dependent protein kinase holoenzyme complex"/>
    <property type="evidence" value="ECO:0000318"/>
    <property type="project" value="GO_Central"/>
</dbReference>
<dbReference type="GO" id="GO:0005737">
    <property type="term" value="C:cytoplasm"/>
    <property type="evidence" value="ECO:0000318"/>
    <property type="project" value="GO_Central"/>
</dbReference>
<dbReference type="GO" id="GO:0005634">
    <property type="term" value="C:nucleus"/>
    <property type="evidence" value="ECO:0000318"/>
    <property type="project" value="GO_Central"/>
</dbReference>
<dbReference type="GO" id="GO:0005524">
    <property type="term" value="F:ATP binding"/>
    <property type="evidence" value="ECO:0007669"/>
    <property type="project" value="UniProtKB-KW"/>
</dbReference>
<dbReference type="GO" id="GO:0030332">
    <property type="term" value="F:cyclin binding"/>
    <property type="evidence" value="ECO:0000318"/>
    <property type="project" value="GO_Central"/>
</dbReference>
<dbReference type="GO" id="GO:0004693">
    <property type="term" value="F:cyclin-dependent protein serine/threonine kinase activity"/>
    <property type="evidence" value="ECO:0000318"/>
    <property type="project" value="GO_Central"/>
</dbReference>
<dbReference type="GO" id="GO:0106310">
    <property type="term" value="F:protein serine kinase activity"/>
    <property type="evidence" value="ECO:0007669"/>
    <property type="project" value="RHEA"/>
</dbReference>
<dbReference type="GO" id="GO:0008353">
    <property type="term" value="F:RNA polymerase II CTD heptapeptide repeat kinase activity"/>
    <property type="evidence" value="ECO:0007669"/>
    <property type="project" value="UniProtKB-EC"/>
</dbReference>
<dbReference type="GO" id="GO:0000082">
    <property type="term" value="P:G1/S transition of mitotic cell cycle"/>
    <property type="evidence" value="ECO:0000318"/>
    <property type="project" value="GO_Central"/>
</dbReference>
<dbReference type="GO" id="GO:0010389">
    <property type="term" value="P:regulation of G2/M transition of mitotic cell cycle"/>
    <property type="evidence" value="ECO:0000318"/>
    <property type="project" value="GO_Central"/>
</dbReference>
<dbReference type="GO" id="GO:0010468">
    <property type="term" value="P:regulation of gene expression"/>
    <property type="evidence" value="ECO:0000318"/>
    <property type="project" value="GO_Central"/>
</dbReference>
<dbReference type="GO" id="GO:0007165">
    <property type="term" value="P:signal transduction"/>
    <property type="evidence" value="ECO:0000318"/>
    <property type="project" value="GO_Central"/>
</dbReference>
<dbReference type="FunFam" id="1.10.510.10:FF:000281">
    <property type="entry name" value="Cyclin-dependent kinase 2"/>
    <property type="match status" value="1"/>
</dbReference>
<dbReference type="FunFam" id="3.30.200.20:FF:000231">
    <property type="entry name" value="Cyclin-dependent kinase B2,2"/>
    <property type="match status" value="1"/>
</dbReference>
<dbReference type="Gene3D" id="3.30.200.20">
    <property type="entry name" value="Phosphorylase Kinase, domain 1"/>
    <property type="match status" value="1"/>
</dbReference>
<dbReference type="Gene3D" id="1.10.510.10">
    <property type="entry name" value="Transferase(Phosphotransferase) domain 1"/>
    <property type="match status" value="1"/>
</dbReference>
<dbReference type="InterPro" id="IPR050108">
    <property type="entry name" value="CDK"/>
</dbReference>
<dbReference type="InterPro" id="IPR011009">
    <property type="entry name" value="Kinase-like_dom_sf"/>
</dbReference>
<dbReference type="InterPro" id="IPR000719">
    <property type="entry name" value="Prot_kinase_dom"/>
</dbReference>
<dbReference type="InterPro" id="IPR017441">
    <property type="entry name" value="Protein_kinase_ATP_BS"/>
</dbReference>
<dbReference type="InterPro" id="IPR008271">
    <property type="entry name" value="Ser/Thr_kinase_AS"/>
</dbReference>
<dbReference type="PANTHER" id="PTHR24056">
    <property type="entry name" value="CELL DIVISION PROTEIN KINASE"/>
    <property type="match status" value="1"/>
</dbReference>
<dbReference type="PANTHER" id="PTHR24056:SF254">
    <property type="entry name" value="CYCLIN-DEPENDENT KINASE 2"/>
    <property type="match status" value="1"/>
</dbReference>
<dbReference type="Pfam" id="PF00069">
    <property type="entry name" value="Pkinase"/>
    <property type="match status" value="1"/>
</dbReference>
<dbReference type="SMART" id="SM00220">
    <property type="entry name" value="S_TKc"/>
    <property type="match status" value="1"/>
</dbReference>
<dbReference type="SUPFAM" id="SSF56112">
    <property type="entry name" value="Protein kinase-like (PK-like)"/>
    <property type="match status" value="1"/>
</dbReference>
<dbReference type="PROSITE" id="PS00107">
    <property type="entry name" value="PROTEIN_KINASE_ATP"/>
    <property type="match status" value="1"/>
</dbReference>
<dbReference type="PROSITE" id="PS50011">
    <property type="entry name" value="PROTEIN_KINASE_DOM"/>
    <property type="match status" value="1"/>
</dbReference>
<dbReference type="PROSITE" id="PS00108">
    <property type="entry name" value="PROTEIN_KINASE_ST"/>
    <property type="match status" value="1"/>
</dbReference>
<organism>
    <name type="scientific">Oryza sativa subsp. japonica</name>
    <name type="common">Rice</name>
    <dbReference type="NCBI Taxonomy" id="39947"/>
    <lineage>
        <taxon>Eukaryota</taxon>
        <taxon>Viridiplantae</taxon>
        <taxon>Streptophyta</taxon>
        <taxon>Embryophyta</taxon>
        <taxon>Tracheophyta</taxon>
        <taxon>Spermatophyta</taxon>
        <taxon>Magnoliopsida</taxon>
        <taxon>Liliopsida</taxon>
        <taxon>Poales</taxon>
        <taxon>Poaceae</taxon>
        <taxon>BOP clade</taxon>
        <taxon>Oryzoideae</taxon>
        <taxon>Oryzeae</taxon>
        <taxon>Oryzinae</taxon>
        <taxon>Oryza</taxon>
        <taxon>Oryza sativa</taxon>
    </lineage>
</organism>
<proteinExistence type="evidence at transcript level"/>
<accession>Q8L4P8</accession>
<accession>A0A0P0VBT7</accession>
<accession>B9EVC5</accession>
<accession>Q0JGY0</accession>
<accession>Q5N8M3</accession>
<comment type="catalytic activity">
    <reaction>
        <text>L-seryl-[protein] + ATP = O-phospho-L-seryl-[protein] + ADP + H(+)</text>
        <dbReference type="Rhea" id="RHEA:17989"/>
        <dbReference type="Rhea" id="RHEA-COMP:9863"/>
        <dbReference type="Rhea" id="RHEA-COMP:11604"/>
        <dbReference type="ChEBI" id="CHEBI:15378"/>
        <dbReference type="ChEBI" id="CHEBI:29999"/>
        <dbReference type="ChEBI" id="CHEBI:30616"/>
        <dbReference type="ChEBI" id="CHEBI:83421"/>
        <dbReference type="ChEBI" id="CHEBI:456216"/>
        <dbReference type="EC" id="2.7.11.22"/>
    </reaction>
</comment>
<comment type="catalytic activity">
    <reaction>
        <text>L-threonyl-[protein] + ATP = O-phospho-L-threonyl-[protein] + ADP + H(+)</text>
        <dbReference type="Rhea" id="RHEA:46608"/>
        <dbReference type="Rhea" id="RHEA-COMP:11060"/>
        <dbReference type="Rhea" id="RHEA-COMP:11605"/>
        <dbReference type="ChEBI" id="CHEBI:15378"/>
        <dbReference type="ChEBI" id="CHEBI:30013"/>
        <dbReference type="ChEBI" id="CHEBI:30616"/>
        <dbReference type="ChEBI" id="CHEBI:61977"/>
        <dbReference type="ChEBI" id="CHEBI:456216"/>
        <dbReference type="EC" id="2.7.11.22"/>
    </reaction>
</comment>
<comment type="catalytic activity">
    <reaction>
        <text>[DNA-directed RNA polymerase] + ATP = phospho-[DNA-directed RNA polymerase] + ADP + H(+)</text>
        <dbReference type="Rhea" id="RHEA:10216"/>
        <dbReference type="Rhea" id="RHEA-COMP:11321"/>
        <dbReference type="Rhea" id="RHEA-COMP:11322"/>
        <dbReference type="ChEBI" id="CHEBI:15378"/>
        <dbReference type="ChEBI" id="CHEBI:30616"/>
        <dbReference type="ChEBI" id="CHEBI:43176"/>
        <dbReference type="ChEBI" id="CHEBI:68546"/>
        <dbReference type="ChEBI" id="CHEBI:456216"/>
        <dbReference type="EC" id="2.7.11.23"/>
    </reaction>
</comment>
<comment type="tissue specificity">
    <text evidence="4">Expressed in actively dividing cells: root and shoot apical meristems, and young leaves.</text>
</comment>
<comment type="induction">
    <text evidence="4">Down-regulated by sucrose starvation in suspension cell culture.</text>
</comment>
<comment type="similarity">
    <text evidence="5">Belongs to the protein kinase superfamily. CMGC Ser/Thr protein kinase family. CDC2/CDKX subfamily.</text>
</comment>
<comment type="sequence caution" evidence="5">
    <conflict type="erroneous gene model prediction">
        <sequence resource="EMBL-CDS" id="BAD82176"/>
    </conflict>
</comment>
<comment type="sequence caution" evidence="5">
    <conflict type="erroneous gene model prediction">
        <sequence resource="EMBL-CDS" id="BAF06998"/>
    </conflict>
</comment>
<reference key="1">
    <citation type="journal article" date="2006" name="Plant Biotechnol.">
        <title>Isolation and characterization of a rice cDNA encoding B1-type cyclin-dependent kinase.</title>
        <authorList>
            <person name="Sakaguchi N."/>
            <person name="Furukawa T."/>
            <person name="Shimada H."/>
            <person name="Hashimoto J."/>
            <person name="Sakaguchi K."/>
            <person name="Umeda M."/>
        </authorList>
    </citation>
    <scope>NUCLEOTIDE SEQUENCE [MRNA]</scope>
    <scope>TISSUE SPECIFICITY</scope>
    <scope>INDUCTION</scope>
    <source>
        <strain>cv. Nipponbare</strain>
    </source>
</reference>
<reference key="2">
    <citation type="journal article" date="2002" name="Nature">
        <title>The genome sequence and structure of rice chromosome 1.</title>
        <authorList>
            <person name="Sasaki T."/>
            <person name="Matsumoto T."/>
            <person name="Yamamoto K."/>
            <person name="Sakata K."/>
            <person name="Baba T."/>
            <person name="Katayose Y."/>
            <person name="Wu J."/>
            <person name="Niimura Y."/>
            <person name="Cheng Z."/>
            <person name="Nagamura Y."/>
            <person name="Antonio B.A."/>
            <person name="Kanamori H."/>
            <person name="Hosokawa S."/>
            <person name="Masukawa M."/>
            <person name="Arikawa K."/>
            <person name="Chiden Y."/>
            <person name="Hayashi M."/>
            <person name="Okamoto M."/>
            <person name="Ando T."/>
            <person name="Aoki H."/>
            <person name="Arita K."/>
            <person name="Hamada M."/>
            <person name="Harada C."/>
            <person name="Hijishita S."/>
            <person name="Honda M."/>
            <person name="Ichikawa Y."/>
            <person name="Idonuma A."/>
            <person name="Iijima M."/>
            <person name="Ikeda M."/>
            <person name="Ikeno M."/>
            <person name="Ito S."/>
            <person name="Ito T."/>
            <person name="Ito Y."/>
            <person name="Ito Y."/>
            <person name="Iwabuchi A."/>
            <person name="Kamiya K."/>
            <person name="Karasawa W."/>
            <person name="Katagiri S."/>
            <person name="Kikuta A."/>
            <person name="Kobayashi N."/>
            <person name="Kono I."/>
            <person name="Machita K."/>
            <person name="Maehara T."/>
            <person name="Mizuno H."/>
            <person name="Mizubayashi T."/>
            <person name="Mukai Y."/>
            <person name="Nagasaki H."/>
            <person name="Nakashima M."/>
            <person name="Nakama Y."/>
            <person name="Nakamichi Y."/>
            <person name="Nakamura M."/>
            <person name="Namiki N."/>
            <person name="Negishi M."/>
            <person name="Ohta I."/>
            <person name="Ono N."/>
            <person name="Saji S."/>
            <person name="Sakai K."/>
            <person name="Shibata M."/>
            <person name="Shimokawa T."/>
            <person name="Shomura A."/>
            <person name="Song J."/>
            <person name="Takazaki Y."/>
            <person name="Terasawa K."/>
            <person name="Tsuji K."/>
            <person name="Waki K."/>
            <person name="Yamagata H."/>
            <person name="Yamane H."/>
            <person name="Yoshiki S."/>
            <person name="Yoshihara R."/>
            <person name="Yukawa K."/>
            <person name="Zhong H."/>
            <person name="Iwama H."/>
            <person name="Endo T."/>
            <person name="Ito H."/>
            <person name="Hahn J.H."/>
            <person name="Kim H.-I."/>
            <person name="Eun M.-Y."/>
            <person name="Yano M."/>
            <person name="Jiang J."/>
            <person name="Gojobori T."/>
        </authorList>
    </citation>
    <scope>NUCLEOTIDE SEQUENCE [LARGE SCALE GENOMIC DNA]</scope>
    <source>
        <strain>cv. Nipponbare</strain>
    </source>
</reference>
<reference key="3">
    <citation type="journal article" date="2005" name="Nature">
        <title>The map-based sequence of the rice genome.</title>
        <authorList>
            <consortium name="International rice genome sequencing project (IRGSP)"/>
        </authorList>
    </citation>
    <scope>NUCLEOTIDE SEQUENCE [LARGE SCALE GENOMIC DNA]</scope>
    <source>
        <strain>cv. Nipponbare</strain>
    </source>
</reference>
<reference key="4">
    <citation type="journal article" date="2008" name="Nucleic Acids Res.">
        <title>The rice annotation project database (RAP-DB): 2008 update.</title>
        <authorList>
            <consortium name="The rice annotation project (RAP)"/>
        </authorList>
    </citation>
    <scope>GENOME REANNOTATION</scope>
    <source>
        <strain>cv. Nipponbare</strain>
    </source>
</reference>
<reference key="5">
    <citation type="journal article" date="2013" name="Rice">
        <title>Improvement of the Oryza sativa Nipponbare reference genome using next generation sequence and optical map data.</title>
        <authorList>
            <person name="Kawahara Y."/>
            <person name="de la Bastide M."/>
            <person name="Hamilton J.P."/>
            <person name="Kanamori H."/>
            <person name="McCombie W.R."/>
            <person name="Ouyang S."/>
            <person name="Schwartz D.C."/>
            <person name="Tanaka T."/>
            <person name="Wu J."/>
            <person name="Zhou S."/>
            <person name="Childs K.L."/>
            <person name="Davidson R.M."/>
            <person name="Lin H."/>
            <person name="Quesada-Ocampo L."/>
            <person name="Vaillancourt B."/>
            <person name="Sakai H."/>
            <person name="Lee S.S."/>
            <person name="Kim J."/>
            <person name="Numa H."/>
            <person name="Itoh T."/>
            <person name="Buell C.R."/>
            <person name="Matsumoto T."/>
        </authorList>
    </citation>
    <scope>GENOME REANNOTATION</scope>
    <source>
        <strain>cv. Nipponbare</strain>
    </source>
</reference>
<reference key="6">
    <citation type="journal article" date="2005" name="PLoS Biol.">
        <title>The genomes of Oryza sativa: a history of duplications.</title>
        <authorList>
            <person name="Yu J."/>
            <person name="Wang J."/>
            <person name="Lin W."/>
            <person name="Li S."/>
            <person name="Li H."/>
            <person name="Zhou J."/>
            <person name="Ni P."/>
            <person name="Dong W."/>
            <person name="Hu S."/>
            <person name="Zeng C."/>
            <person name="Zhang J."/>
            <person name="Zhang Y."/>
            <person name="Li R."/>
            <person name="Xu Z."/>
            <person name="Li S."/>
            <person name="Li X."/>
            <person name="Zheng H."/>
            <person name="Cong L."/>
            <person name="Lin L."/>
            <person name="Yin J."/>
            <person name="Geng J."/>
            <person name="Li G."/>
            <person name="Shi J."/>
            <person name="Liu J."/>
            <person name="Lv H."/>
            <person name="Li J."/>
            <person name="Wang J."/>
            <person name="Deng Y."/>
            <person name="Ran L."/>
            <person name="Shi X."/>
            <person name="Wang X."/>
            <person name="Wu Q."/>
            <person name="Li C."/>
            <person name="Ren X."/>
            <person name="Wang J."/>
            <person name="Wang X."/>
            <person name="Li D."/>
            <person name="Liu D."/>
            <person name="Zhang X."/>
            <person name="Ji Z."/>
            <person name="Zhao W."/>
            <person name="Sun Y."/>
            <person name="Zhang Z."/>
            <person name="Bao J."/>
            <person name="Han Y."/>
            <person name="Dong L."/>
            <person name="Ji J."/>
            <person name="Chen P."/>
            <person name="Wu S."/>
            <person name="Liu J."/>
            <person name="Xiao Y."/>
            <person name="Bu D."/>
            <person name="Tan J."/>
            <person name="Yang L."/>
            <person name="Ye C."/>
            <person name="Zhang J."/>
            <person name="Xu J."/>
            <person name="Zhou Y."/>
            <person name="Yu Y."/>
            <person name="Zhang B."/>
            <person name="Zhuang S."/>
            <person name="Wei H."/>
            <person name="Liu B."/>
            <person name="Lei M."/>
            <person name="Yu H."/>
            <person name="Li Y."/>
            <person name="Xu H."/>
            <person name="Wei S."/>
            <person name="He X."/>
            <person name="Fang L."/>
            <person name="Zhang Z."/>
            <person name="Zhang Y."/>
            <person name="Huang X."/>
            <person name="Su Z."/>
            <person name="Tong W."/>
            <person name="Li J."/>
            <person name="Tong Z."/>
            <person name="Li S."/>
            <person name="Ye J."/>
            <person name="Wang L."/>
            <person name="Fang L."/>
            <person name="Lei T."/>
            <person name="Chen C.-S."/>
            <person name="Chen H.-C."/>
            <person name="Xu Z."/>
            <person name="Li H."/>
            <person name="Huang H."/>
            <person name="Zhang F."/>
            <person name="Xu H."/>
            <person name="Li N."/>
            <person name="Zhao C."/>
            <person name="Li S."/>
            <person name="Dong L."/>
            <person name="Huang Y."/>
            <person name="Li L."/>
            <person name="Xi Y."/>
            <person name="Qi Q."/>
            <person name="Li W."/>
            <person name="Zhang B."/>
            <person name="Hu W."/>
            <person name="Zhang Y."/>
            <person name="Tian X."/>
            <person name="Jiao Y."/>
            <person name="Liang X."/>
            <person name="Jin J."/>
            <person name="Gao L."/>
            <person name="Zheng W."/>
            <person name="Hao B."/>
            <person name="Liu S.-M."/>
            <person name="Wang W."/>
            <person name="Yuan L."/>
            <person name="Cao M."/>
            <person name="McDermott J."/>
            <person name="Samudrala R."/>
            <person name="Wang J."/>
            <person name="Wong G.K.-S."/>
            <person name="Yang H."/>
        </authorList>
    </citation>
    <scope>NUCLEOTIDE SEQUENCE [LARGE SCALE GENOMIC DNA]</scope>
    <source>
        <strain>cv. Nipponbare</strain>
    </source>
</reference>
<reference key="7">
    <citation type="journal article" date="2007" name="Plant Mol. Biol.">
        <title>Genome-wide identification and expression analysis of rice cell cycle genes.</title>
        <authorList>
            <person name="Guo J."/>
            <person name="Song J."/>
            <person name="Wang F."/>
            <person name="Zhang X.S."/>
        </authorList>
    </citation>
    <scope>GENE FAMILY</scope>
</reference>
<name>CKB11_ORYSJ</name>
<sequence length="303" mass="34602">MEKYEKLEKVGEGTYGKVYKAQDRATGQLVALKKTRLEMDEEGIPPTALREISILRLLSQSLYVVRLLSVEQATKNGKPVLYLVFEFLDTDLKKFVDAYRKGPNPRPLPTNVIKSFLYQLCKGVAHCHGHGVLHRDLKPQNLLVDKEKGILKIADLGLGRAFTVPMKSYTHEIVTLWYRAPEVLLGSTHYSTGVDIWSVGCIFAEMVRRQALFPGDSELQQLLHIFRLLGTPTEEQWPGVTDLRDWHEFPQWKPQILERQVPSLEPEGVDLLSKMLQYNPANRISAKAAMEHPYFDSLDKSQF</sequence>
<feature type="chain" id="PRO_0000296098" description="Cyclin-dependent kinase B1-1">
    <location>
        <begin position="1"/>
        <end position="303"/>
    </location>
</feature>
<feature type="domain" description="Protein kinase" evidence="2">
    <location>
        <begin position="4"/>
        <end position="295"/>
    </location>
</feature>
<feature type="active site" description="Proton acceptor" evidence="2 3">
    <location>
        <position position="136"/>
    </location>
</feature>
<feature type="binding site" evidence="2">
    <location>
        <begin position="10"/>
        <end position="18"/>
    </location>
    <ligand>
        <name>ATP</name>
        <dbReference type="ChEBI" id="CHEBI:30616"/>
    </ligand>
</feature>
<feature type="binding site" evidence="2">
    <location>
        <position position="33"/>
    </location>
    <ligand>
        <name>ATP</name>
        <dbReference type="ChEBI" id="CHEBI:30616"/>
    </ligand>
</feature>
<feature type="modified residue" description="Phosphothreonine" evidence="1">
    <location>
        <position position="14"/>
    </location>
</feature>
<feature type="modified residue" description="Phosphotyrosine" evidence="1">
    <location>
        <position position="15"/>
    </location>
</feature>
<feature type="modified residue" description="Phosphothreonine" evidence="1">
    <location>
        <position position="170"/>
    </location>
</feature>
<protein>
    <recommendedName>
        <fullName>Cyclin-dependent kinase B1-1</fullName>
        <shortName>CDKB1;1</shortName>
        <shortName>CDKB;1</shortName>
        <ecNumber>2.7.11.22</ecNumber>
        <ecNumber>2.7.11.23</ecNumber>
    </recommendedName>
</protein>
<evidence type="ECO:0000250" key="1"/>
<evidence type="ECO:0000255" key="2">
    <source>
        <dbReference type="PROSITE-ProRule" id="PRU00159"/>
    </source>
</evidence>
<evidence type="ECO:0000255" key="3">
    <source>
        <dbReference type="PROSITE-ProRule" id="PRU10027"/>
    </source>
</evidence>
<evidence type="ECO:0000269" key="4">
    <source ref="1"/>
</evidence>
<evidence type="ECO:0000305" key="5"/>